<feature type="chain" id="PRO_1000005879" description="DNA-directed RNA polymerase subunit omega">
    <location>
        <begin position="1"/>
        <end position="67"/>
    </location>
</feature>
<keyword id="KW-0240">DNA-directed RNA polymerase</keyword>
<keyword id="KW-0548">Nucleotidyltransferase</keyword>
<keyword id="KW-0804">Transcription</keyword>
<keyword id="KW-0808">Transferase</keyword>
<sequence>MARITVEDCLEQIPNRFQLVLAATYRARMLSQGHAPKIESRNKPAVTALREIAAGKVGLEMLKKVPG</sequence>
<organism>
    <name type="scientific">Acidovorax sp. (strain JS42)</name>
    <dbReference type="NCBI Taxonomy" id="232721"/>
    <lineage>
        <taxon>Bacteria</taxon>
        <taxon>Pseudomonadati</taxon>
        <taxon>Pseudomonadota</taxon>
        <taxon>Betaproteobacteria</taxon>
        <taxon>Burkholderiales</taxon>
        <taxon>Comamonadaceae</taxon>
        <taxon>Acidovorax</taxon>
    </lineage>
</organism>
<protein>
    <recommendedName>
        <fullName evidence="1">DNA-directed RNA polymerase subunit omega</fullName>
        <shortName evidence="1">RNAP omega subunit</shortName>
        <ecNumber evidence="1">2.7.7.6</ecNumber>
    </recommendedName>
    <alternativeName>
        <fullName evidence="1">RNA polymerase omega subunit</fullName>
    </alternativeName>
    <alternativeName>
        <fullName evidence="1">Transcriptase subunit omega</fullName>
    </alternativeName>
</protein>
<dbReference type="EC" id="2.7.7.6" evidence="1"/>
<dbReference type="EMBL" id="CP000539">
    <property type="protein sequence ID" value="ABM41188.1"/>
    <property type="molecule type" value="Genomic_DNA"/>
</dbReference>
<dbReference type="SMR" id="A1W4L3"/>
<dbReference type="STRING" id="232721.Ajs_0948"/>
<dbReference type="KEGG" id="ajs:Ajs_0948"/>
<dbReference type="eggNOG" id="COG1758">
    <property type="taxonomic scope" value="Bacteria"/>
</dbReference>
<dbReference type="HOGENOM" id="CLU_125406_5_1_4"/>
<dbReference type="Proteomes" id="UP000000645">
    <property type="component" value="Chromosome"/>
</dbReference>
<dbReference type="GO" id="GO:0000428">
    <property type="term" value="C:DNA-directed RNA polymerase complex"/>
    <property type="evidence" value="ECO:0007669"/>
    <property type="project" value="UniProtKB-KW"/>
</dbReference>
<dbReference type="GO" id="GO:0003677">
    <property type="term" value="F:DNA binding"/>
    <property type="evidence" value="ECO:0007669"/>
    <property type="project" value="UniProtKB-UniRule"/>
</dbReference>
<dbReference type="GO" id="GO:0003899">
    <property type="term" value="F:DNA-directed RNA polymerase activity"/>
    <property type="evidence" value="ECO:0007669"/>
    <property type="project" value="UniProtKB-UniRule"/>
</dbReference>
<dbReference type="GO" id="GO:0006351">
    <property type="term" value="P:DNA-templated transcription"/>
    <property type="evidence" value="ECO:0007669"/>
    <property type="project" value="UniProtKB-UniRule"/>
</dbReference>
<dbReference type="Gene3D" id="3.90.940.10">
    <property type="match status" value="1"/>
</dbReference>
<dbReference type="HAMAP" id="MF_00366">
    <property type="entry name" value="RNApol_bact_RpoZ"/>
    <property type="match status" value="1"/>
</dbReference>
<dbReference type="InterPro" id="IPR003716">
    <property type="entry name" value="DNA-dir_RNA_pol_omega"/>
</dbReference>
<dbReference type="InterPro" id="IPR006110">
    <property type="entry name" value="Pol_omega/Rpo6/RPB6"/>
</dbReference>
<dbReference type="InterPro" id="IPR036161">
    <property type="entry name" value="RPB6/omega-like_sf"/>
</dbReference>
<dbReference type="NCBIfam" id="TIGR00690">
    <property type="entry name" value="rpoZ"/>
    <property type="match status" value="1"/>
</dbReference>
<dbReference type="PANTHER" id="PTHR34476">
    <property type="entry name" value="DNA-DIRECTED RNA POLYMERASE SUBUNIT OMEGA"/>
    <property type="match status" value="1"/>
</dbReference>
<dbReference type="PANTHER" id="PTHR34476:SF1">
    <property type="entry name" value="DNA-DIRECTED RNA POLYMERASE SUBUNIT OMEGA"/>
    <property type="match status" value="1"/>
</dbReference>
<dbReference type="Pfam" id="PF01192">
    <property type="entry name" value="RNA_pol_Rpb6"/>
    <property type="match status" value="1"/>
</dbReference>
<dbReference type="SMART" id="SM01409">
    <property type="entry name" value="RNA_pol_Rpb6"/>
    <property type="match status" value="1"/>
</dbReference>
<dbReference type="SUPFAM" id="SSF63562">
    <property type="entry name" value="RPB6/omega subunit-like"/>
    <property type="match status" value="1"/>
</dbReference>
<name>RPOZ_ACISJ</name>
<reference key="1">
    <citation type="submission" date="2006-12" db="EMBL/GenBank/DDBJ databases">
        <title>Complete sequence of chromosome 1 of Acidovorax sp. JS42.</title>
        <authorList>
            <person name="Copeland A."/>
            <person name="Lucas S."/>
            <person name="Lapidus A."/>
            <person name="Barry K."/>
            <person name="Detter J.C."/>
            <person name="Glavina del Rio T."/>
            <person name="Dalin E."/>
            <person name="Tice H."/>
            <person name="Pitluck S."/>
            <person name="Chertkov O."/>
            <person name="Brettin T."/>
            <person name="Bruce D."/>
            <person name="Han C."/>
            <person name="Tapia R."/>
            <person name="Gilna P."/>
            <person name="Schmutz J."/>
            <person name="Larimer F."/>
            <person name="Land M."/>
            <person name="Hauser L."/>
            <person name="Kyrpides N."/>
            <person name="Kim E."/>
            <person name="Stahl D."/>
            <person name="Richardson P."/>
        </authorList>
    </citation>
    <scope>NUCLEOTIDE SEQUENCE [LARGE SCALE GENOMIC DNA]</scope>
    <source>
        <strain>JS42</strain>
    </source>
</reference>
<comment type="function">
    <text evidence="1">Promotes RNA polymerase assembly. Latches the N- and C-terminal regions of the beta' subunit thereby facilitating its interaction with the beta and alpha subunits.</text>
</comment>
<comment type="catalytic activity">
    <reaction evidence="1">
        <text>RNA(n) + a ribonucleoside 5'-triphosphate = RNA(n+1) + diphosphate</text>
        <dbReference type="Rhea" id="RHEA:21248"/>
        <dbReference type="Rhea" id="RHEA-COMP:14527"/>
        <dbReference type="Rhea" id="RHEA-COMP:17342"/>
        <dbReference type="ChEBI" id="CHEBI:33019"/>
        <dbReference type="ChEBI" id="CHEBI:61557"/>
        <dbReference type="ChEBI" id="CHEBI:140395"/>
        <dbReference type="EC" id="2.7.7.6"/>
    </reaction>
</comment>
<comment type="subunit">
    <text evidence="1">The RNAP catalytic core consists of 2 alpha, 1 beta, 1 beta' and 1 omega subunit. When a sigma factor is associated with the core the holoenzyme is formed, which can initiate transcription.</text>
</comment>
<comment type="similarity">
    <text evidence="1">Belongs to the RNA polymerase subunit omega family.</text>
</comment>
<evidence type="ECO:0000255" key="1">
    <source>
        <dbReference type="HAMAP-Rule" id="MF_00366"/>
    </source>
</evidence>
<gene>
    <name evidence="1" type="primary">rpoZ</name>
    <name type="ordered locus">Ajs_0948</name>
</gene>
<proteinExistence type="inferred from homology"/>
<accession>A1W4L3</accession>